<feature type="chain" id="PRO_0000414012" description="Clathrin light chain 1">
    <location>
        <begin position="1"/>
        <end position="301"/>
    </location>
</feature>
<feature type="region of interest" description="Disordered" evidence="3">
    <location>
        <begin position="1"/>
        <end position="103"/>
    </location>
</feature>
<feature type="region of interest" description="Involved in binding clathrin heavy chain" evidence="1">
    <location>
        <begin position="102"/>
        <end position="164"/>
    </location>
</feature>
<feature type="region of interest" description="Disordered" evidence="3">
    <location>
        <begin position="200"/>
        <end position="301"/>
    </location>
</feature>
<feature type="coiled-coil region" evidence="2">
    <location>
        <begin position="111"/>
        <end position="147"/>
    </location>
</feature>
<feature type="compositionally biased region" description="Low complexity" evidence="3">
    <location>
        <begin position="29"/>
        <end position="51"/>
    </location>
</feature>
<feature type="compositionally biased region" description="Acidic residues" evidence="3">
    <location>
        <begin position="52"/>
        <end position="65"/>
    </location>
</feature>
<feature type="compositionally biased region" description="Basic and acidic residues" evidence="3">
    <location>
        <begin position="200"/>
        <end position="212"/>
    </location>
</feature>
<feature type="compositionally biased region" description="Pro residues" evidence="3">
    <location>
        <begin position="243"/>
        <end position="252"/>
    </location>
</feature>
<feature type="compositionally biased region" description="Basic and acidic residues" evidence="3">
    <location>
        <begin position="291"/>
        <end position="301"/>
    </location>
</feature>
<reference key="1">
    <citation type="journal article" date="2002" name="Nature">
        <title>Sequence and analysis of rice chromosome 4.</title>
        <authorList>
            <person name="Feng Q."/>
            <person name="Zhang Y."/>
            <person name="Hao P."/>
            <person name="Wang S."/>
            <person name="Fu G."/>
            <person name="Huang Y."/>
            <person name="Li Y."/>
            <person name="Zhu J."/>
            <person name="Liu Y."/>
            <person name="Hu X."/>
            <person name="Jia P."/>
            <person name="Zhang Y."/>
            <person name="Zhao Q."/>
            <person name="Ying K."/>
            <person name="Yu S."/>
            <person name="Tang Y."/>
            <person name="Weng Q."/>
            <person name="Zhang L."/>
            <person name="Lu Y."/>
            <person name="Mu J."/>
            <person name="Lu Y."/>
            <person name="Zhang L.S."/>
            <person name="Yu Z."/>
            <person name="Fan D."/>
            <person name="Liu X."/>
            <person name="Lu T."/>
            <person name="Li C."/>
            <person name="Wu Y."/>
            <person name="Sun T."/>
            <person name="Lei H."/>
            <person name="Li T."/>
            <person name="Hu H."/>
            <person name="Guan J."/>
            <person name="Wu M."/>
            <person name="Zhang R."/>
            <person name="Zhou B."/>
            <person name="Chen Z."/>
            <person name="Chen L."/>
            <person name="Jin Z."/>
            <person name="Wang R."/>
            <person name="Yin H."/>
            <person name="Cai Z."/>
            <person name="Ren S."/>
            <person name="Lv G."/>
            <person name="Gu W."/>
            <person name="Zhu G."/>
            <person name="Tu Y."/>
            <person name="Jia J."/>
            <person name="Zhang Y."/>
            <person name="Chen J."/>
            <person name="Kang H."/>
            <person name="Chen X."/>
            <person name="Shao C."/>
            <person name="Sun Y."/>
            <person name="Hu Q."/>
            <person name="Zhang X."/>
            <person name="Zhang W."/>
            <person name="Wang L."/>
            <person name="Ding C."/>
            <person name="Sheng H."/>
            <person name="Gu J."/>
            <person name="Chen S."/>
            <person name="Ni L."/>
            <person name="Zhu F."/>
            <person name="Chen W."/>
            <person name="Lan L."/>
            <person name="Lai Y."/>
            <person name="Cheng Z."/>
            <person name="Gu M."/>
            <person name="Jiang J."/>
            <person name="Li J."/>
            <person name="Hong G."/>
            <person name="Xue Y."/>
            <person name="Han B."/>
        </authorList>
    </citation>
    <scope>NUCLEOTIDE SEQUENCE [LARGE SCALE GENOMIC DNA]</scope>
    <source>
        <strain>cv. Nipponbare</strain>
    </source>
</reference>
<reference key="2">
    <citation type="journal article" date="2005" name="Nature">
        <title>The map-based sequence of the rice genome.</title>
        <authorList>
            <consortium name="International rice genome sequencing project (IRGSP)"/>
        </authorList>
    </citation>
    <scope>NUCLEOTIDE SEQUENCE [LARGE SCALE GENOMIC DNA]</scope>
    <source>
        <strain>cv. Nipponbare</strain>
    </source>
</reference>
<reference key="3">
    <citation type="journal article" date="2008" name="Nucleic Acids Res.">
        <title>The rice annotation project database (RAP-DB): 2008 update.</title>
        <authorList>
            <consortium name="The rice annotation project (RAP)"/>
        </authorList>
    </citation>
    <scope>GENOME REANNOTATION</scope>
    <source>
        <strain>cv. Nipponbare</strain>
    </source>
</reference>
<reference key="4">
    <citation type="journal article" date="2013" name="Rice">
        <title>Improvement of the Oryza sativa Nipponbare reference genome using next generation sequence and optical map data.</title>
        <authorList>
            <person name="Kawahara Y."/>
            <person name="de la Bastide M."/>
            <person name="Hamilton J.P."/>
            <person name="Kanamori H."/>
            <person name="McCombie W.R."/>
            <person name="Ouyang S."/>
            <person name="Schwartz D.C."/>
            <person name="Tanaka T."/>
            <person name="Wu J."/>
            <person name="Zhou S."/>
            <person name="Childs K.L."/>
            <person name="Davidson R.M."/>
            <person name="Lin H."/>
            <person name="Quesada-Ocampo L."/>
            <person name="Vaillancourt B."/>
            <person name="Sakai H."/>
            <person name="Lee S.S."/>
            <person name="Kim J."/>
            <person name="Numa H."/>
            <person name="Itoh T."/>
            <person name="Buell C.R."/>
            <person name="Matsumoto T."/>
        </authorList>
    </citation>
    <scope>GENOME REANNOTATION</scope>
    <source>
        <strain>cv. Nipponbare</strain>
    </source>
</reference>
<reference key="5">
    <citation type="journal article" date="2005" name="PLoS Biol.">
        <title>The genomes of Oryza sativa: a history of duplications.</title>
        <authorList>
            <person name="Yu J."/>
            <person name="Wang J."/>
            <person name="Lin W."/>
            <person name="Li S."/>
            <person name="Li H."/>
            <person name="Zhou J."/>
            <person name="Ni P."/>
            <person name="Dong W."/>
            <person name="Hu S."/>
            <person name="Zeng C."/>
            <person name="Zhang J."/>
            <person name="Zhang Y."/>
            <person name="Li R."/>
            <person name="Xu Z."/>
            <person name="Li S."/>
            <person name="Li X."/>
            <person name="Zheng H."/>
            <person name="Cong L."/>
            <person name="Lin L."/>
            <person name="Yin J."/>
            <person name="Geng J."/>
            <person name="Li G."/>
            <person name="Shi J."/>
            <person name="Liu J."/>
            <person name="Lv H."/>
            <person name="Li J."/>
            <person name="Wang J."/>
            <person name="Deng Y."/>
            <person name="Ran L."/>
            <person name="Shi X."/>
            <person name="Wang X."/>
            <person name="Wu Q."/>
            <person name="Li C."/>
            <person name="Ren X."/>
            <person name="Wang J."/>
            <person name="Wang X."/>
            <person name="Li D."/>
            <person name="Liu D."/>
            <person name="Zhang X."/>
            <person name="Ji Z."/>
            <person name="Zhao W."/>
            <person name="Sun Y."/>
            <person name="Zhang Z."/>
            <person name="Bao J."/>
            <person name="Han Y."/>
            <person name="Dong L."/>
            <person name="Ji J."/>
            <person name="Chen P."/>
            <person name="Wu S."/>
            <person name="Liu J."/>
            <person name="Xiao Y."/>
            <person name="Bu D."/>
            <person name="Tan J."/>
            <person name="Yang L."/>
            <person name="Ye C."/>
            <person name="Zhang J."/>
            <person name="Xu J."/>
            <person name="Zhou Y."/>
            <person name="Yu Y."/>
            <person name="Zhang B."/>
            <person name="Zhuang S."/>
            <person name="Wei H."/>
            <person name="Liu B."/>
            <person name="Lei M."/>
            <person name="Yu H."/>
            <person name="Li Y."/>
            <person name="Xu H."/>
            <person name="Wei S."/>
            <person name="He X."/>
            <person name="Fang L."/>
            <person name="Zhang Z."/>
            <person name="Zhang Y."/>
            <person name="Huang X."/>
            <person name="Su Z."/>
            <person name="Tong W."/>
            <person name="Li J."/>
            <person name="Tong Z."/>
            <person name="Li S."/>
            <person name="Ye J."/>
            <person name="Wang L."/>
            <person name="Fang L."/>
            <person name="Lei T."/>
            <person name="Chen C.-S."/>
            <person name="Chen H.-C."/>
            <person name="Xu Z."/>
            <person name="Li H."/>
            <person name="Huang H."/>
            <person name="Zhang F."/>
            <person name="Xu H."/>
            <person name="Li N."/>
            <person name="Zhao C."/>
            <person name="Li S."/>
            <person name="Dong L."/>
            <person name="Huang Y."/>
            <person name="Li L."/>
            <person name="Xi Y."/>
            <person name="Qi Q."/>
            <person name="Li W."/>
            <person name="Zhang B."/>
            <person name="Hu W."/>
            <person name="Zhang Y."/>
            <person name="Tian X."/>
            <person name="Jiao Y."/>
            <person name="Liang X."/>
            <person name="Jin J."/>
            <person name="Gao L."/>
            <person name="Zheng W."/>
            <person name="Hao B."/>
            <person name="Liu S.-M."/>
            <person name="Wang W."/>
            <person name="Yuan L."/>
            <person name="Cao M."/>
            <person name="McDermott J."/>
            <person name="Samudrala R."/>
            <person name="Wang J."/>
            <person name="Wong G.K.-S."/>
            <person name="Yang H."/>
        </authorList>
    </citation>
    <scope>NUCLEOTIDE SEQUENCE [LARGE SCALE GENOMIC DNA]</scope>
    <source>
        <strain>cv. Nipponbare</strain>
    </source>
</reference>
<reference key="6">
    <citation type="journal article" date="2003" name="Science">
        <title>Collection, mapping, and annotation of over 28,000 cDNA clones from japonica rice.</title>
        <authorList>
            <consortium name="The rice full-length cDNA consortium"/>
        </authorList>
    </citation>
    <scope>NUCLEOTIDE SEQUENCE [LARGE SCALE MRNA]</scope>
    <source>
        <strain>cv. Nipponbare</strain>
    </source>
</reference>
<gene>
    <name type="ordered locus">Os04g0679100</name>
    <name type="ordered locus">LOC_Os04g58240</name>
    <name type="ORF">OsJ_16638</name>
    <name type="ORF">OSJNBb0017I01.5</name>
</gene>
<name>CLC1_ORYSJ</name>
<evidence type="ECO:0000250" key="1"/>
<evidence type="ECO:0000255" key="2"/>
<evidence type="ECO:0000256" key="3">
    <source>
        <dbReference type="SAM" id="MobiDB-lite"/>
    </source>
</evidence>
<evidence type="ECO:0000305" key="4"/>
<dbReference type="EMBL" id="AL606456">
    <property type="protein sequence ID" value="CAE05725.1"/>
    <property type="molecule type" value="Genomic_DNA"/>
</dbReference>
<dbReference type="EMBL" id="AP008210">
    <property type="protein sequence ID" value="BAF16192.1"/>
    <property type="molecule type" value="Genomic_DNA"/>
</dbReference>
<dbReference type="EMBL" id="AP014960">
    <property type="protein sequence ID" value="BAS91652.1"/>
    <property type="molecule type" value="Genomic_DNA"/>
</dbReference>
<dbReference type="EMBL" id="CM000141">
    <property type="protein sequence ID" value="EAZ32428.1"/>
    <property type="molecule type" value="Genomic_DNA"/>
</dbReference>
<dbReference type="EMBL" id="AK103034">
    <property type="protein sequence ID" value="BAG95847.1"/>
    <property type="molecule type" value="mRNA"/>
</dbReference>
<dbReference type="RefSeq" id="XP_015636176.1">
    <property type="nucleotide sequence ID" value="XM_015780690.1"/>
</dbReference>
<dbReference type="SMR" id="Q7XKE9"/>
<dbReference type="FunCoup" id="Q7XKE9">
    <property type="interactions" value="2190"/>
</dbReference>
<dbReference type="STRING" id="39947.Q7XKE9"/>
<dbReference type="PaxDb" id="39947-Q7XKE9"/>
<dbReference type="EnsemblPlants" id="Os04t0679100-01">
    <property type="protein sequence ID" value="Os04t0679100-01"/>
    <property type="gene ID" value="Os04g0679100"/>
</dbReference>
<dbReference type="Gramene" id="Os04t0679100-01">
    <property type="protein sequence ID" value="Os04t0679100-01"/>
    <property type="gene ID" value="Os04g0679100"/>
</dbReference>
<dbReference type="KEGG" id="dosa:Os04g0679100"/>
<dbReference type="eggNOG" id="ENOG502QVX7">
    <property type="taxonomic scope" value="Eukaryota"/>
</dbReference>
<dbReference type="HOGENOM" id="CLU_053778_0_0_1"/>
<dbReference type="InParanoid" id="Q7XKE9"/>
<dbReference type="OMA" id="STHQHDD"/>
<dbReference type="OrthoDB" id="782264at2759"/>
<dbReference type="Proteomes" id="UP000000763">
    <property type="component" value="Chromosome 4"/>
</dbReference>
<dbReference type="Proteomes" id="UP000007752">
    <property type="component" value="Chromosome 4"/>
</dbReference>
<dbReference type="Proteomes" id="UP000059680">
    <property type="component" value="Chromosome 4"/>
</dbReference>
<dbReference type="GO" id="GO:0030132">
    <property type="term" value="C:clathrin coat of coated pit"/>
    <property type="evidence" value="ECO:0007669"/>
    <property type="project" value="InterPro"/>
</dbReference>
<dbReference type="GO" id="GO:0030130">
    <property type="term" value="C:clathrin coat of trans-Golgi network vesicle"/>
    <property type="evidence" value="ECO:0007669"/>
    <property type="project" value="InterPro"/>
</dbReference>
<dbReference type="GO" id="GO:0030125">
    <property type="term" value="C:clathrin vesicle coat"/>
    <property type="evidence" value="ECO:0000318"/>
    <property type="project" value="GO_Central"/>
</dbReference>
<dbReference type="GO" id="GO:0005886">
    <property type="term" value="C:plasma membrane"/>
    <property type="evidence" value="ECO:0000318"/>
    <property type="project" value="GO_Central"/>
</dbReference>
<dbReference type="GO" id="GO:0032050">
    <property type="term" value="F:clathrin heavy chain binding"/>
    <property type="evidence" value="ECO:0000318"/>
    <property type="project" value="GO_Central"/>
</dbReference>
<dbReference type="GO" id="GO:0005198">
    <property type="term" value="F:structural molecule activity"/>
    <property type="evidence" value="ECO:0007669"/>
    <property type="project" value="InterPro"/>
</dbReference>
<dbReference type="GO" id="GO:0072583">
    <property type="term" value="P:clathrin-dependent endocytosis"/>
    <property type="evidence" value="ECO:0000318"/>
    <property type="project" value="GO_Central"/>
</dbReference>
<dbReference type="GO" id="GO:0006886">
    <property type="term" value="P:intracellular protein transport"/>
    <property type="evidence" value="ECO:0007669"/>
    <property type="project" value="InterPro"/>
</dbReference>
<dbReference type="InterPro" id="IPR000996">
    <property type="entry name" value="Clathrin_L-chain"/>
</dbReference>
<dbReference type="PANTHER" id="PTHR10639">
    <property type="entry name" value="CLATHRIN LIGHT CHAIN"/>
    <property type="match status" value="1"/>
</dbReference>
<dbReference type="PANTHER" id="PTHR10639:SF42">
    <property type="entry name" value="CLATHRIN LIGHT CHAIN 1"/>
    <property type="match status" value="1"/>
</dbReference>
<dbReference type="Pfam" id="PF01086">
    <property type="entry name" value="Clathrin_lg_ch"/>
    <property type="match status" value="1"/>
</dbReference>
<protein>
    <recommendedName>
        <fullName>Clathrin light chain 1</fullName>
    </recommendedName>
</protein>
<keyword id="KW-0168">Coated pit</keyword>
<keyword id="KW-0175">Coiled coil</keyword>
<keyword id="KW-0968">Cytoplasmic vesicle</keyword>
<keyword id="KW-0472">Membrane</keyword>
<keyword id="KW-1185">Reference proteome</keyword>
<comment type="function">
    <text>Clathrin is the major protein of the polyhedral coat of coated pits and vesicles.</text>
</comment>
<comment type="subunit">
    <text evidence="1">Clathrin coats are formed from molecules containing 3 heavy chains and 3 light chains.</text>
</comment>
<comment type="subcellular location">
    <subcellularLocation>
        <location evidence="1">Cytoplasmic vesicle membrane</location>
        <topology evidence="1">Peripheral membrane protein</topology>
        <orientation evidence="1">Cytoplasmic side</orientation>
    </subcellularLocation>
    <subcellularLocation>
        <location evidence="1">Membrane</location>
        <location evidence="1">Coated pit</location>
        <topology evidence="1">Peripheral membrane protein</topology>
        <orientation evidence="1">Cytoplasmic side</orientation>
    </subcellularLocation>
    <text evidence="1">Cytoplasmic face of coated pits and vesicles.</text>
</comment>
<comment type="similarity">
    <text evidence="4">Belongs to the clathrin light chain family.</text>
</comment>
<organism>
    <name type="scientific">Oryza sativa subsp. japonica</name>
    <name type="common">Rice</name>
    <dbReference type="NCBI Taxonomy" id="39947"/>
    <lineage>
        <taxon>Eukaryota</taxon>
        <taxon>Viridiplantae</taxon>
        <taxon>Streptophyta</taxon>
        <taxon>Embryophyta</taxon>
        <taxon>Tracheophyta</taxon>
        <taxon>Spermatophyta</taxon>
        <taxon>Magnoliopsida</taxon>
        <taxon>Liliopsida</taxon>
        <taxon>Poales</taxon>
        <taxon>Poaceae</taxon>
        <taxon>BOP clade</taxon>
        <taxon>Oryzoideae</taxon>
        <taxon>Oryzeae</taxon>
        <taxon>Oryzinae</taxon>
        <taxon>Oryza</taxon>
        <taxon>Oryza sativa</taxon>
    </lineage>
</organism>
<accession>Q7XKE9</accession>
<accession>A0A0P0WGP5</accession>
<proteinExistence type="evidence at transcript level"/>
<sequence>MASFFADDGADELPRTASHPFDADDDAAPDASGGAAADDTGYGGYASFVDGGVEDVEEEEEEIAVESEGVPIGHVSGGFSPSPFSPDPELDGGDGPILPPPAQMGAEEGILLREWRRQNAIVLEEKERKEKELRAQILAEAEEFKKAFYEKRIQNCETNKVHNREREKIFVAGQEKFHAEADKQYWKSISELIPHEIATIEKRGKKDKDKKPSITVIQGPKPGKPTDLSRMRQILVKLKHAPPPHMMQPPPASAAKDGAKDGAKDGTPAPANGTKKPAESKEKPANGSPAEAEKEQPAASE</sequence>